<reference key="1">
    <citation type="journal article" date="2005" name="Science">
        <title>The transcriptional landscape of the mammalian genome.</title>
        <authorList>
            <person name="Carninci P."/>
            <person name="Kasukawa T."/>
            <person name="Katayama S."/>
            <person name="Gough J."/>
            <person name="Frith M.C."/>
            <person name="Maeda N."/>
            <person name="Oyama R."/>
            <person name="Ravasi T."/>
            <person name="Lenhard B."/>
            <person name="Wells C."/>
            <person name="Kodzius R."/>
            <person name="Shimokawa K."/>
            <person name="Bajic V.B."/>
            <person name="Brenner S.E."/>
            <person name="Batalov S."/>
            <person name="Forrest A.R."/>
            <person name="Zavolan M."/>
            <person name="Davis M.J."/>
            <person name="Wilming L.G."/>
            <person name="Aidinis V."/>
            <person name="Allen J.E."/>
            <person name="Ambesi-Impiombato A."/>
            <person name="Apweiler R."/>
            <person name="Aturaliya R.N."/>
            <person name="Bailey T.L."/>
            <person name="Bansal M."/>
            <person name="Baxter L."/>
            <person name="Beisel K.W."/>
            <person name="Bersano T."/>
            <person name="Bono H."/>
            <person name="Chalk A.M."/>
            <person name="Chiu K.P."/>
            <person name="Choudhary V."/>
            <person name="Christoffels A."/>
            <person name="Clutterbuck D.R."/>
            <person name="Crowe M.L."/>
            <person name="Dalla E."/>
            <person name="Dalrymple B.P."/>
            <person name="de Bono B."/>
            <person name="Della Gatta G."/>
            <person name="di Bernardo D."/>
            <person name="Down T."/>
            <person name="Engstrom P."/>
            <person name="Fagiolini M."/>
            <person name="Faulkner G."/>
            <person name="Fletcher C.F."/>
            <person name="Fukushima T."/>
            <person name="Furuno M."/>
            <person name="Futaki S."/>
            <person name="Gariboldi M."/>
            <person name="Georgii-Hemming P."/>
            <person name="Gingeras T.R."/>
            <person name="Gojobori T."/>
            <person name="Green R.E."/>
            <person name="Gustincich S."/>
            <person name="Harbers M."/>
            <person name="Hayashi Y."/>
            <person name="Hensch T.K."/>
            <person name="Hirokawa N."/>
            <person name="Hill D."/>
            <person name="Huminiecki L."/>
            <person name="Iacono M."/>
            <person name="Ikeo K."/>
            <person name="Iwama A."/>
            <person name="Ishikawa T."/>
            <person name="Jakt M."/>
            <person name="Kanapin A."/>
            <person name="Katoh M."/>
            <person name="Kawasawa Y."/>
            <person name="Kelso J."/>
            <person name="Kitamura H."/>
            <person name="Kitano H."/>
            <person name="Kollias G."/>
            <person name="Krishnan S.P."/>
            <person name="Kruger A."/>
            <person name="Kummerfeld S.K."/>
            <person name="Kurochkin I.V."/>
            <person name="Lareau L.F."/>
            <person name="Lazarevic D."/>
            <person name="Lipovich L."/>
            <person name="Liu J."/>
            <person name="Liuni S."/>
            <person name="McWilliam S."/>
            <person name="Madan Babu M."/>
            <person name="Madera M."/>
            <person name="Marchionni L."/>
            <person name="Matsuda H."/>
            <person name="Matsuzawa S."/>
            <person name="Miki H."/>
            <person name="Mignone F."/>
            <person name="Miyake S."/>
            <person name="Morris K."/>
            <person name="Mottagui-Tabar S."/>
            <person name="Mulder N."/>
            <person name="Nakano N."/>
            <person name="Nakauchi H."/>
            <person name="Ng P."/>
            <person name="Nilsson R."/>
            <person name="Nishiguchi S."/>
            <person name="Nishikawa S."/>
            <person name="Nori F."/>
            <person name="Ohara O."/>
            <person name="Okazaki Y."/>
            <person name="Orlando V."/>
            <person name="Pang K.C."/>
            <person name="Pavan W.J."/>
            <person name="Pavesi G."/>
            <person name="Pesole G."/>
            <person name="Petrovsky N."/>
            <person name="Piazza S."/>
            <person name="Reed J."/>
            <person name="Reid J.F."/>
            <person name="Ring B.Z."/>
            <person name="Ringwald M."/>
            <person name="Rost B."/>
            <person name="Ruan Y."/>
            <person name="Salzberg S.L."/>
            <person name="Sandelin A."/>
            <person name="Schneider C."/>
            <person name="Schoenbach C."/>
            <person name="Sekiguchi K."/>
            <person name="Semple C.A."/>
            <person name="Seno S."/>
            <person name="Sessa L."/>
            <person name="Sheng Y."/>
            <person name="Shibata Y."/>
            <person name="Shimada H."/>
            <person name="Shimada K."/>
            <person name="Silva D."/>
            <person name="Sinclair B."/>
            <person name="Sperling S."/>
            <person name="Stupka E."/>
            <person name="Sugiura K."/>
            <person name="Sultana R."/>
            <person name="Takenaka Y."/>
            <person name="Taki K."/>
            <person name="Tammoja K."/>
            <person name="Tan S.L."/>
            <person name="Tang S."/>
            <person name="Taylor M.S."/>
            <person name="Tegner J."/>
            <person name="Teichmann S.A."/>
            <person name="Ueda H.R."/>
            <person name="van Nimwegen E."/>
            <person name="Verardo R."/>
            <person name="Wei C.L."/>
            <person name="Yagi K."/>
            <person name="Yamanishi H."/>
            <person name="Zabarovsky E."/>
            <person name="Zhu S."/>
            <person name="Zimmer A."/>
            <person name="Hide W."/>
            <person name="Bult C."/>
            <person name="Grimmond S.M."/>
            <person name="Teasdale R.D."/>
            <person name="Liu E.T."/>
            <person name="Brusic V."/>
            <person name="Quackenbush J."/>
            <person name="Wahlestedt C."/>
            <person name="Mattick J.S."/>
            <person name="Hume D.A."/>
            <person name="Kai C."/>
            <person name="Sasaki D."/>
            <person name="Tomaru Y."/>
            <person name="Fukuda S."/>
            <person name="Kanamori-Katayama M."/>
            <person name="Suzuki M."/>
            <person name="Aoki J."/>
            <person name="Arakawa T."/>
            <person name="Iida J."/>
            <person name="Imamura K."/>
            <person name="Itoh M."/>
            <person name="Kato T."/>
            <person name="Kawaji H."/>
            <person name="Kawagashira N."/>
            <person name="Kawashima T."/>
            <person name="Kojima M."/>
            <person name="Kondo S."/>
            <person name="Konno H."/>
            <person name="Nakano K."/>
            <person name="Ninomiya N."/>
            <person name="Nishio T."/>
            <person name="Okada M."/>
            <person name="Plessy C."/>
            <person name="Shibata K."/>
            <person name="Shiraki T."/>
            <person name="Suzuki S."/>
            <person name="Tagami M."/>
            <person name="Waki K."/>
            <person name="Watahiki A."/>
            <person name="Okamura-Oho Y."/>
            <person name="Suzuki H."/>
            <person name="Kawai J."/>
            <person name="Hayashizaki Y."/>
        </authorList>
    </citation>
    <scope>NUCLEOTIDE SEQUENCE [LARGE SCALE MRNA] (ISOFORMS 1 AND 2)</scope>
    <source>
        <strain>C57BL/6J</strain>
        <tissue>Bone marrow</tissue>
    </source>
</reference>
<reference key="2">
    <citation type="journal article" date="2004" name="Genome Res.">
        <title>The status, quality, and expansion of the NIH full-length cDNA project: the Mammalian Gene Collection (MGC).</title>
        <authorList>
            <consortium name="The MGC Project Team"/>
        </authorList>
    </citation>
    <scope>NUCLEOTIDE SEQUENCE [LARGE SCALE MRNA] (ISOFORM 1)</scope>
    <source>
        <strain>FVB/N</strain>
        <tissue>Mammary tumor</tissue>
    </source>
</reference>
<reference key="3">
    <citation type="journal article" date="2013" name="Mol. Biol. Cell">
        <title>The Rilp-like proteins Rilpl1 and Rilpl2 regulate ciliary membrane content.</title>
        <authorList>
            <person name="Schaub J.R."/>
            <person name="Stearns T."/>
        </authorList>
    </citation>
    <scope>FUNCTION</scope>
    <scope>SUBCELLULAR LOCATION</scope>
</reference>
<reference key="4">
    <citation type="journal article" date="2017" name="Elife">
        <title>Systematic proteomic analysis of LRRK2-mediated Rab GTPase phosphorylation establishes a connection to ciliogenesis.</title>
        <authorList>
            <person name="Steger M."/>
            <person name="Diez F."/>
            <person name="Dhekne H.S."/>
            <person name="Lis P."/>
            <person name="Nirujogi R.S."/>
            <person name="Karayel O."/>
            <person name="Tonelli F."/>
            <person name="Martinez T.N."/>
            <person name="Lorentzen E."/>
            <person name="Pfeffer S.R."/>
            <person name="Alessi D.R."/>
            <person name="Mann M."/>
        </authorList>
    </citation>
    <scope>INTERACTION WITH RAB8A</scope>
</reference>
<reference key="5">
    <citation type="journal article" date="2013" name="Proc. Natl. Acad. Sci. U.S.A.">
        <title>Structural basis of cargo recognitions for class V myosins.</title>
        <authorList>
            <person name="Wei Z."/>
            <person name="Liu X."/>
            <person name="Yu C."/>
            <person name="Zhang M."/>
        </authorList>
    </citation>
    <scope>X-RAY CRYSTALLOGRAPHY (2.4 ANGSTROMS) OF 1-97 IN COMPLEX WITH MYO5A AND MLPH</scope>
    <scope>INTERACTION WITH MYO5A</scope>
    <scope>SUBUNIT</scope>
    <scope>MUTAGENESIS OF PHE-56; VAL-59 AND VAL-61</scope>
    <scope>IDENTIFICATION IN A COMPLEX WITH MYO5A AND MLPH</scope>
</reference>
<evidence type="ECO:0000250" key="1"/>
<evidence type="ECO:0000250" key="2">
    <source>
        <dbReference type="UniProtKB" id="Q6AYA0"/>
    </source>
</evidence>
<evidence type="ECO:0000250" key="3">
    <source>
        <dbReference type="UniProtKB" id="Q969X0"/>
    </source>
</evidence>
<evidence type="ECO:0000255" key="4"/>
<evidence type="ECO:0000255" key="5">
    <source>
        <dbReference type="PROSITE-ProRule" id="PRU01112"/>
    </source>
</evidence>
<evidence type="ECO:0000255" key="6">
    <source>
        <dbReference type="PROSITE-ProRule" id="PRU01113"/>
    </source>
</evidence>
<evidence type="ECO:0000256" key="7">
    <source>
        <dbReference type="SAM" id="MobiDB-lite"/>
    </source>
</evidence>
<evidence type="ECO:0000269" key="8">
    <source>
    </source>
</evidence>
<evidence type="ECO:0000269" key="9">
    <source>
    </source>
</evidence>
<evidence type="ECO:0000269" key="10">
    <source>
    </source>
</evidence>
<evidence type="ECO:0000303" key="11">
    <source>
    </source>
</evidence>
<evidence type="ECO:0000305" key="12"/>
<evidence type="ECO:0007829" key="13">
    <source>
        <dbReference type="PDB" id="4KP3"/>
    </source>
</evidence>
<proteinExistence type="evidence at protein level"/>
<dbReference type="EMBL" id="AK133760">
    <property type="protein sequence ID" value="BAE21826.1"/>
    <property type="molecule type" value="mRNA"/>
</dbReference>
<dbReference type="EMBL" id="AK150123">
    <property type="protein sequence ID" value="BAE29324.1"/>
    <property type="molecule type" value="mRNA"/>
</dbReference>
<dbReference type="EMBL" id="AK150252">
    <property type="protein sequence ID" value="BAE29414.1"/>
    <property type="molecule type" value="mRNA"/>
</dbReference>
<dbReference type="EMBL" id="AK171419">
    <property type="protein sequence ID" value="BAE42441.1"/>
    <property type="molecule type" value="mRNA"/>
</dbReference>
<dbReference type="EMBL" id="BC003324">
    <property type="protein sequence ID" value="AAH03324.1"/>
    <property type="molecule type" value="mRNA"/>
</dbReference>
<dbReference type="CCDS" id="CCDS19676.1">
    <molecule id="Q99LE1-1"/>
</dbReference>
<dbReference type="RefSeq" id="NP_084535.1">
    <molecule id="Q99LE1-1"/>
    <property type="nucleotide sequence ID" value="NM_030259.1"/>
</dbReference>
<dbReference type="PDB" id="4KP3">
    <property type="method" value="X-ray"/>
    <property type="resolution" value="2.40 A"/>
    <property type="chains" value="C/D=1-97"/>
</dbReference>
<dbReference type="PDBsum" id="4KP3"/>
<dbReference type="SMR" id="Q99LE1"/>
<dbReference type="FunCoup" id="Q99LE1">
    <property type="interactions" value="417"/>
</dbReference>
<dbReference type="IntAct" id="Q99LE1">
    <property type="interactions" value="1"/>
</dbReference>
<dbReference type="STRING" id="10090.ENSMUSP00000031347"/>
<dbReference type="iPTMnet" id="Q99LE1"/>
<dbReference type="PhosphoSitePlus" id="Q99LE1"/>
<dbReference type="PaxDb" id="10090-ENSMUSP00000031347"/>
<dbReference type="PeptideAtlas" id="Q99LE1"/>
<dbReference type="ProteomicsDB" id="253314">
    <molecule id="Q99LE1-1"/>
</dbReference>
<dbReference type="ProteomicsDB" id="253315">
    <molecule id="Q99LE1-2"/>
</dbReference>
<dbReference type="Pumba" id="Q99LE1"/>
<dbReference type="Antibodypedia" id="31814">
    <property type="antibodies" value="114 antibodies from 24 providers"/>
</dbReference>
<dbReference type="DNASU" id="80291"/>
<dbReference type="Ensembl" id="ENSMUST00000031347.8">
    <molecule id="Q99LE1-1"/>
    <property type="protein sequence ID" value="ENSMUSP00000031347.8"/>
    <property type="gene ID" value="ENSMUSG00000029401.9"/>
</dbReference>
<dbReference type="GeneID" id="80291"/>
<dbReference type="KEGG" id="mmu:80291"/>
<dbReference type="UCSC" id="uc008zpx.1">
    <molecule id="Q99LE1-1"/>
    <property type="organism name" value="mouse"/>
</dbReference>
<dbReference type="UCSC" id="uc057abr.1">
    <molecule id="Q99LE1-2"/>
    <property type="organism name" value="mouse"/>
</dbReference>
<dbReference type="AGR" id="MGI:1933112"/>
<dbReference type="CTD" id="196383"/>
<dbReference type="MGI" id="MGI:1933112">
    <property type="gene designation" value="Rilpl2"/>
</dbReference>
<dbReference type="VEuPathDB" id="HostDB:ENSMUSG00000029401"/>
<dbReference type="eggNOG" id="ENOG502S08B">
    <property type="taxonomic scope" value="Eukaryota"/>
</dbReference>
<dbReference type="GeneTree" id="ENSGT00940000160182"/>
<dbReference type="HOGENOM" id="CLU_096533_1_0_1"/>
<dbReference type="InParanoid" id="Q99LE1"/>
<dbReference type="OMA" id="FPREKEN"/>
<dbReference type="OrthoDB" id="10069524at2759"/>
<dbReference type="PhylomeDB" id="Q99LE1"/>
<dbReference type="TreeFam" id="TF313489"/>
<dbReference type="BioGRID-ORCS" id="80291">
    <property type="hits" value="3 hits in 77 CRISPR screens"/>
</dbReference>
<dbReference type="ChiTaRS" id="Rilpl2">
    <property type="organism name" value="mouse"/>
</dbReference>
<dbReference type="EvolutionaryTrace" id="Q99LE1"/>
<dbReference type="PRO" id="PR:Q99LE1"/>
<dbReference type="Proteomes" id="UP000000589">
    <property type="component" value="Chromosome 5"/>
</dbReference>
<dbReference type="RNAct" id="Q99LE1">
    <property type="molecule type" value="protein"/>
</dbReference>
<dbReference type="Bgee" id="ENSMUSG00000029401">
    <property type="expression patterns" value="Expressed in placenta labyrinth and 250 other cell types or tissues"/>
</dbReference>
<dbReference type="GO" id="GO:0005813">
    <property type="term" value="C:centrosome"/>
    <property type="evidence" value="ECO:0000314"/>
    <property type="project" value="UniProtKB"/>
</dbReference>
<dbReference type="GO" id="GO:0005929">
    <property type="term" value="C:cilium"/>
    <property type="evidence" value="ECO:0000314"/>
    <property type="project" value="UniProtKB"/>
</dbReference>
<dbReference type="GO" id="GO:0005829">
    <property type="term" value="C:cytosol"/>
    <property type="evidence" value="ECO:0007669"/>
    <property type="project" value="UniProtKB-SubCell"/>
</dbReference>
<dbReference type="GO" id="GO:0043231">
    <property type="term" value="C:intracellular membrane-bounded organelle"/>
    <property type="evidence" value="ECO:0007669"/>
    <property type="project" value="Ensembl"/>
</dbReference>
<dbReference type="GO" id="GO:0016020">
    <property type="term" value="C:membrane"/>
    <property type="evidence" value="ECO:0007669"/>
    <property type="project" value="GOC"/>
</dbReference>
<dbReference type="GO" id="GO:0042802">
    <property type="term" value="F:identical protein binding"/>
    <property type="evidence" value="ECO:0007669"/>
    <property type="project" value="Ensembl"/>
</dbReference>
<dbReference type="GO" id="GO:0046983">
    <property type="term" value="F:protein dimerization activity"/>
    <property type="evidence" value="ECO:0007669"/>
    <property type="project" value="InterPro"/>
</dbReference>
<dbReference type="GO" id="GO:0003382">
    <property type="term" value="P:epithelial cell morphogenesis"/>
    <property type="evidence" value="ECO:0000315"/>
    <property type="project" value="UniProtKB"/>
</dbReference>
<dbReference type="GO" id="GO:1903445">
    <property type="term" value="P:protein transport from ciliary membrane to plasma membrane"/>
    <property type="evidence" value="ECO:0000315"/>
    <property type="project" value="UniProtKB"/>
</dbReference>
<dbReference type="CDD" id="cd14445">
    <property type="entry name" value="RILP-like"/>
    <property type="match status" value="1"/>
</dbReference>
<dbReference type="FunFam" id="1.20.58.1770:FF:000003">
    <property type="entry name" value="RILP-like protein 2 isoform X1"/>
    <property type="match status" value="1"/>
</dbReference>
<dbReference type="Gene3D" id="1.20.58.1770">
    <property type="match status" value="1"/>
</dbReference>
<dbReference type="Gene3D" id="6.10.230.10">
    <property type="match status" value="1"/>
</dbReference>
<dbReference type="InterPro" id="IPR051241">
    <property type="entry name" value="DZIP_RILPL"/>
</dbReference>
<dbReference type="InterPro" id="IPR034743">
    <property type="entry name" value="RH1"/>
</dbReference>
<dbReference type="InterPro" id="IPR034744">
    <property type="entry name" value="RH2"/>
</dbReference>
<dbReference type="InterPro" id="IPR021563">
    <property type="entry name" value="RILP_dimer"/>
</dbReference>
<dbReference type="PANTHER" id="PTHR21502:SF2">
    <property type="entry name" value="RILP-LIKE PROTEIN 2"/>
    <property type="match status" value="1"/>
</dbReference>
<dbReference type="PANTHER" id="PTHR21502">
    <property type="entry name" value="ZINC FINGER PROTEIN DZIP1"/>
    <property type="match status" value="1"/>
</dbReference>
<dbReference type="Pfam" id="PF09744">
    <property type="entry name" value="RH1"/>
    <property type="match status" value="1"/>
</dbReference>
<dbReference type="Pfam" id="PF11461">
    <property type="entry name" value="RILP"/>
    <property type="match status" value="1"/>
</dbReference>
<dbReference type="SUPFAM" id="SSF161256">
    <property type="entry name" value="RILP dimerisation region"/>
    <property type="match status" value="1"/>
</dbReference>
<dbReference type="PROSITE" id="PS51776">
    <property type="entry name" value="RH1"/>
    <property type="match status" value="1"/>
</dbReference>
<dbReference type="PROSITE" id="PS51777">
    <property type="entry name" value="RH2"/>
    <property type="match status" value="1"/>
</dbReference>
<organism>
    <name type="scientific">Mus musculus</name>
    <name type="common">Mouse</name>
    <dbReference type="NCBI Taxonomy" id="10090"/>
    <lineage>
        <taxon>Eukaryota</taxon>
        <taxon>Metazoa</taxon>
        <taxon>Chordata</taxon>
        <taxon>Craniata</taxon>
        <taxon>Vertebrata</taxon>
        <taxon>Euteleostomi</taxon>
        <taxon>Mammalia</taxon>
        <taxon>Eutheria</taxon>
        <taxon>Euarchontoglires</taxon>
        <taxon>Glires</taxon>
        <taxon>Rodentia</taxon>
        <taxon>Myomorpha</taxon>
        <taxon>Muroidea</taxon>
        <taxon>Muridae</taxon>
        <taxon>Murinae</taxon>
        <taxon>Mus</taxon>
        <taxon>Mus</taxon>
    </lineage>
</organism>
<comment type="function">
    <text evidence="2 8">Involved in cell shape and neuronal morphogenesis, positively regulating the establishment and maintenance of dendritic spines (By similarity). Plays a role in cellular protein transport, including protein transport away from primary cilia (PubMed:23264467). May function via activation of RAC1 and PAK1 (By similarity).</text>
</comment>
<comment type="subunit">
    <text evidence="2 3 9 10">Homodimer (PubMed:23798443). Interacts with RAC1 (By similarity). Interacts (via N-terminus) with MYO5A, the interaction is required for its role in dendrite formation (PubMed:23798443). Interacts with RAB8A; interaction is dependent on the phosphorylation of RAB8A on 'Thr-72' (PubMed:29125462). Interacts with RAB10 and RAB12; interaction is dependent on the phosphorylation of 'Thr-73' on RAB10 and 'Ser-105' on RAB12 (By similarity).</text>
</comment>
<comment type="subcellular location">
    <subcellularLocation>
        <location evidence="1">Cytoplasm</location>
        <location evidence="1">Cytosol</location>
    </subcellularLocation>
    <subcellularLocation>
        <location evidence="8">Cytoplasm</location>
        <location evidence="8">Cytoskeleton</location>
        <location evidence="8">Microtubule organizing center</location>
        <location evidence="8">Centrosome</location>
    </subcellularLocation>
    <subcellularLocation>
        <location evidence="8">Cell projection</location>
        <location evidence="8">Cilium</location>
    </subcellularLocation>
</comment>
<comment type="alternative products">
    <event type="alternative splicing"/>
    <isoform>
        <id>Q99LE1-1</id>
        <name>1</name>
        <sequence type="displayed"/>
    </isoform>
    <isoform>
        <id>Q99LE1-2</id>
        <name>2</name>
        <sequence type="described" ref="VSP_030853"/>
    </isoform>
</comment>
<comment type="similarity">
    <text evidence="12">Belongs to the RILPL family.</text>
</comment>
<gene>
    <name type="primary">Rilpl2</name>
</gene>
<keyword id="KW-0002">3D-structure</keyword>
<keyword id="KW-0025">Alternative splicing</keyword>
<keyword id="KW-0966">Cell projection</keyword>
<keyword id="KW-0969">Cilium</keyword>
<keyword id="KW-0175">Coiled coil</keyword>
<keyword id="KW-0963">Cytoplasm</keyword>
<keyword id="KW-0206">Cytoskeleton</keyword>
<keyword id="KW-0653">Protein transport</keyword>
<keyword id="KW-1185">Reference proteome</keyword>
<keyword id="KW-0813">Transport</keyword>
<sequence>MEDHPVREEEDGEEDEGALAKSPLQLTTDDVYDISYVVGRELMALGSDPRVTRLQFKIVRVMEMLETLVNEGSLAVEELRMERDNLKQEVEGLRKAGVSGAQVNLGPDKMVVDLTDPNRPRFTLQELREVLQERNKLKSQLLLVQEELQCYRSGLLPPRETPGGRREKDAVVAMGNGEKEERTIMKKLFSFRSGKHT</sequence>
<accession>Q99LE1</accession>
<accession>Q3TB73</accession>
<name>RIPL2_MOUSE</name>
<feature type="chain" id="PRO_0000317006" description="RILP-like protein 2">
    <location>
        <begin position="1"/>
        <end position="197"/>
    </location>
</feature>
<feature type="domain" description="RH1" evidence="5">
    <location>
        <begin position="14"/>
        <end position="96"/>
    </location>
</feature>
<feature type="domain" description="RH2" evidence="6">
    <location>
        <begin position="119"/>
        <end position="184"/>
    </location>
</feature>
<feature type="region of interest" description="Disordered" evidence="7">
    <location>
        <begin position="1"/>
        <end position="24"/>
    </location>
</feature>
<feature type="coiled-coil region" evidence="4">
    <location>
        <begin position="69"/>
        <end position="153"/>
    </location>
</feature>
<feature type="compositionally biased region" description="Acidic residues" evidence="7">
    <location>
        <begin position="8"/>
        <end position="17"/>
    </location>
</feature>
<feature type="splice variant" id="VSP_030853" description="In isoform 2." evidence="11">
    <original>NLGPDKMVVDLTDPNRPRFTLQELREVLQERNKLKSQLLLVQEELQCYRSGLLPPRETPGGRREKDAVVAMGNGEKEERTIMKKLFSFRSGKHT</original>
    <variation>SKTQALVWKFPHSSHLLNTY</variation>
    <location>
        <begin position="104"/>
        <end position="197"/>
    </location>
</feature>
<feature type="mutagenesis site" description="Loss of interaction with MYO5A." evidence="9">
    <original>F</original>
    <variation>P</variation>
    <location>
        <position position="56"/>
    </location>
</feature>
<feature type="mutagenesis site" description="Loss of interaction with MYO5A." evidence="9">
    <original>V</original>
    <variation>Q</variation>
    <location>
        <position position="59"/>
    </location>
</feature>
<feature type="mutagenesis site" description="Abolishes homodimerization." evidence="9">
    <original>V</original>
    <variation>E</variation>
    <location>
        <position position="61"/>
    </location>
</feature>
<feature type="helix" evidence="13">
    <location>
        <begin position="16"/>
        <end position="19"/>
    </location>
</feature>
<feature type="helix" evidence="13">
    <location>
        <begin position="23"/>
        <end position="25"/>
    </location>
</feature>
<feature type="helix" evidence="13">
    <location>
        <begin position="28"/>
        <end position="43"/>
    </location>
</feature>
<feature type="helix" evidence="13">
    <location>
        <begin position="49"/>
        <end position="71"/>
    </location>
</feature>
<feature type="helix" evidence="13">
    <location>
        <begin position="74"/>
        <end position="93"/>
    </location>
</feature>
<protein>
    <recommendedName>
        <fullName>RILP-like protein 2</fullName>
    </recommendedName>
    <alternativeName>
        <fullName>Rab-interacting lysosomal-like protein 2</fullName>
    </alternativeName>
</protein>